<feature type="chain" id="PRO_0000248765" description="Proline--tRNA ligase">
    <location>
        <begin position="1"/>
        <end position="572"/>
    </location>
</feature>
<sequence>MRTSQYLLSTLKETPADAEVISHQLMLRAGMIRKLASGLYTWLPTGVRVLKKVENIVREEMNNAGAIEVSMPVVQPADLWQESGRWEQYGPELLRFVDRGERPFVLGPTHEEVITDLIRNELSSYKQLPLNFYQIQTKFRDEVRPRFGVMRSREFLMKDAYSFHTSQESLQETYDAMYAAYSKIFSRMGLDFRAVQADTGSIGGSASHEFQVLAQSGEDDVVFSDTSDYAANIELAEAIAPKEPRAAATQEMTLVDTPNAKTIAELVEQFNLPIEKTVKTLLVKAVEGSSFPLVALLVRGDHELNEVKAEKLPQVASPLTFATEEEIRAVVKAGPGSLGPVNMPIPVVIDRTVAAMSDFAAGANIDGKHYFGINWDRDVATPEVADIRNVVAGDPSPDGQGTLLIKRGIEVGHIFQLGTKYSEALKASVQGEDGRNQILTMGCYGIGVTRVVAAAIEQNYDERGIVWPDAIAPFQVAILPMNMHKSFRVQELAEKLYSELRAQGIEVLLDDRKERPGVMFADMELIGIPHTIVLGDRNLDNDDIEYKYRRNGEKQLIKTGDIVEYLVKQIKG</sequence>
<keyword id="KW-0030">Aminoacyl-tRNA synthetase</keyword>
<keyword id="KW-0067">ATP-binding</keyword>
<keyword id="KW-0963">Cytoplasm</keyword>
<keyword id="KW-0436">Ligase</keyword>
<keyword id="KW-0547">Nucleotide-binding</keyword>
<keyword id="KW-0648">Protein biosynthesis</keyword>
<keyword id="KW-1185">Reference proteome</keyword>
<organism>
    <name type="scientific">Shigella flexneri</name>
    <dbReference type="NCBI Taxonomy" id="623"/>
    <lineage>
        <taxon>Bacteria</taxon>
        <taxon>Pseudomonadati</taxon>
        <taxon>Pseudomonadota</taxon>
        <taxon>Gammaproteobacteria</taxon>
        <taxon>Enterobacterales</taxon>
        <taxon>Enterobacteriaceae</taxon>
        <taxon>Shigella</taxon>
    </lineage>
</organism>
<evidence type="ECO:0000255" key="1">
    <source>
        <dbReference type="HAMAP-Rule" id="MF_01569"/>
    </source>
</evidence>
<proteinExistence type="inferred from homology"/>
<accession>Q83MC8</accession>
<accession>Q7UDQ4</accession>
<reference key="1">
    <citation type="journal article" date="2002" name="Nucleic Acids Res.">
        <title>Genome sequence of Shigella flexneri 2a: insights into pathogenicity through comparison with genomes of Escherichia coli K12 and O157.</title>
        <authorList>
            <person name="Jin Q."/>
            <person name="Yuan Z."/>
            <person name="Xu J."/>
            <person name="Wang Y."/>
            <person name="Shen Y."/>
            <person name="Lu W."/>
            <person name="Wang J."/>
            <person name="Liu H."/>
            <person name="Yang J."/>
            <person name="Yang F."/>
            <person name="Zhang X."/>
            <person name="Zhang J."/>
            <person name="Yang G."/>
            <person name="Wu H."/>
            <person name="Qu D."/>
            <person name="Dong J."/>
            <person name="Sun L."/>
            <person name="Xue Y."/>
            <person name="Zhao A."/>
            <person name="Gao Y."/>
            <person name="Zhu J."/>
            <person name="Kan B."/>
            <person name="Ding K."/>
            <person name="Chen S."/>
            <person name="Cheng H."/>
            <person name="Yao Z."/>
            <person name="He B."/>
            <person name="Chen R."/>
            <person name="Ma D."/>
            <person name="Qiang B."/>
            <person name="Wen Y."/>
            <person name="Hou Y."/>
            <person name="Yu J."/>
        </authorList>
    </citation>
    <scope>NUCLEOTIDE SEQUENCE [LARGE SCALE GENOMIC DNA]</scope>
    <source>
        <strain>301 / Serotype 2a</strain>
    </source>
</reference>
<reference key="2">
    <citation type="journal article" date="2003" name="Infect. Immun.">
        <title>Complete genome sequence and comparative genomics of Shigella flexneri serotype 2a strain 2457T.</title>
        <authorList>
            <person name="Wei J."/>
            <person name="Goldberg M.B."/>
            <person name="Burland V."/>
            <person name="Venkatesan M.M."/>
            <person name="Deng W."/>
            <person name="Fournier G."/>
            <person name="Mayhew G.F."/>
            <person name="Plunkett G. III"/>
            <person name="Rose D.J."/>
            <person name="Darling A."/>
            <person name="Mau B."/>
            <person name="Perna N.T."/>
            <person name="Payne S.M."/>
            <person name="Runyen-Janecky L.J."/>
            <person name="Zhou S."/>
            <person name="Schwartz D.C."/>
            <person name="Blattner F.R."/>
        </authorList>
    </citation>
    <scope>NUCLEOTIDE SEQUENCE [LARGE SCALE GENOMIC DNA]</scope>
    <source>
        <strain>ATCC 700930 / 2457T / Serotype 2a</strain>
    </source>
</reference>
<dbReference type="EC" id="6.1.1.15" evidence="1"/>
<dbReference type="EMBL" id="AE005674">
    <property type="protein sequence ID" value="AAN41847.2"/>
    <property type="molecule type" value="Genomic_DNA"/>
</dbReference>
<dbReference type="EMBL" id="AE014073">
    <property type="protein sequence ID" value="AAP15727.1"/>
    <property type="molecule type" value="Genomic_DNA"/>
</dbReference>
<dbReference type="RefSeq" id="NP_706140.2">
    <property type="nucleotide sequence ID" value="NC_004337.2"/>
</dbReference>
<dbReference type="RefSeq" id="WP_001260712.1">
    <property type="nucleotide sequence ID" value="NZ_WPGW01000006.1"/>
</dbReference>
<dbReference type="SMR" id="Q83MC8"/>
<dbReference type="STRING" id="198214.SF0185"/>
<dbReference type="PaxDb" id="198214-SF0185"/>
<dbReference type="GeneID" id="1024449"/>
<dbReference type="GeneID" id="93777229"/>
<dbReference type="KEGG" id="sfl:SF0185"/>
<dbReference type="KEGG" id="sfx:S0187"/>
<dbReference type="PATRIC" id="fig|198214.7.peg.208"/>
<dbReference type="HOGENOM" id="CLU_016739_0_0_6"/>
<dbReference type="Proteomes" id="UP000001006">
    <property type="component" value="Chromosome"/>
</dbReference>
<dbReference type="Proteomes" id="UP000002673">
    <property type="component" value="Chromosome"/>
</dbReference>
<dbReference type="GO" id="GO:0005829">
    <property type="term" value="C:cytosol"/>
    <property type="evidence" value="ECO:0007669"/>
    <property type="project" value="TreeGrafter"/>
</dbReference>
<dbReference type="GO" id="GO:0002161">
    <property type="term" value="F:aminoacyl-tRNA deacylase activity"/>
    <property type="evidence" value="ECO:0007669"/>
    <property type="project" value="InterPro"/>
</dbReference>
<dbReference type="GO" id="GO:0005524">
    <property type="term" value="F:ATP binding"/>
    <property type="evidence" value="ECO:0007669"/>
    <property type="project" value="UniProtKB-UniRule"/>
</dbReference>
<dbReference type="GO" id="GO:0004827">
    <property type="term" value="F:proline-tRNA ligase activity"/>
    <property type="evidence" value="ECO:0007669"/>
    <property type="project" value="UniProtKB-UniRule"/>
</dbReference>
<dbReference type="GO" id="GO:0006433">
    <property type="term" value="P:prolyl-tRNA aminoacylation"/>
    <property type="evidence" value="ECO:0007669"/>
    <property type="project" value="UniProtKB-UniRule"/>
</dbReference>
<dbReference type="CDD" id="cd04334">
    <property type="entry name" value="ProRS-INS"/>
    <property type="match status" value="1"/>
</dbReference>
<dbReference type="CDD" id="cd00861">
    <property type="entry name" value="ProRS_anticodon_short"/>
    <property type="match status" value="1"/>
</dbReference>
<dbReference type="CDD" id="cd00779">
    <property type="entry name" value="ProRS_core_prok"/>
    <property type="match status" value="1"/>
</dbReference>
<dbReference type="FunFam" id="3.30.930.10:FF:000012">
    <property type="entry name" value="Proline--tRNA ligase"/>
    <property type="match status" value="1"/>
</dbReference>
<dbReference type="FunFam" id="3.30.930.10:FF:000097">
    <property type="entry name" value="Proline--tRNA ligase"/>
    <property type="match status" value="1"/>
</dbReference>
<dbReference type="FunFam" id="3.40.50.800:FF:000006">
    <property type="entry name" value="Proline--tRNA ligase"/>
    <property type="match status" value="1"/>
</dbReference>
<dbReference type="FunFam" id="3.90.960.10:FF:000001">
    <property type="entry name" value="Proline--tRNA ligase"/>
    <property type="match status" value="1"/>
</dbReference>
<dbReference type="Gene3D" id="3.40.50.800">
    <property type="entry name" value="Anticodon-binding domain"/>
    <property type="match status" value="1"/>
</dbReference>
<dbReference type="Gene3D" id="3.30.930.10">
    <property type="entry name" value="Bira Bifunctional Protein, Domain 2"/>
    <property type="match status" value="2"/>
</dbReference>
<dbReference type="Gene3D" id="3.90.960.10">
    <property type="entry name" value="YbaK/aminoacyl-tRNA synthetase-associated domain"/>
    <property type="match status" value="1"/>
</dbReference>
<dbReference type="HAMAP" id="MF_01569">
    <property type="entry name" value="Pro_tRNA_synth_type1"/>
    <property type="match status" value="1"/>
</dbReference>
<dbReference type="InterPro" id="IPR002314">
    <property type="entry name" value="aa-tRNA-synt_IIb"/>
</dbReference>
<dbReference type="InterPro" id="IPR006195">
    <property type="entry name" value="aa-tRNA-synth_II"/>
</dbReference>
<dbReference type="InterPro" id="IPR045864">
    <property type="entry name" value="aa-tRNA-synth_II/BPL/LPL"/>
</dbReference>
<dbReference type="InterPro" id="IPR004154">
    <property type="entry name" value="Anticodon-bd"/>
</dbReference>
<dbReference type="InterPro" id="IPR036621">
    <property type="entry name" value="Anticodon-bd_dom_sf"/>
</dbReference>
<dbReference type="InterPro" id="IPR002316">
    <property type="entry name" value="Pro-tRNA-ligase_IIa"/>
</dbReference>
<dbReference type="InterPro" id="IPR004500">
    <property type="entry name" value="Pro-tRNA-synth_IIa_bac-type"/>
</dbReference>
<dbReference type="InterPro" id="IPR023717">
    <property type="entry name" value="Pro-tRNA-Synthase_IIa_type1"/>
</dbReference>
<dbReference type="InterPro" id="IPR050062">
    <property type="entry name" value="Pro-tRNA_synthetase"/>
</dbReference>
<dbReference type="InterPro" id="IPR044140">
    <property type="entry name" value="ProRS_anticodon_short"/>
</dbReference>
<dbReference type="InterPro" id="IPR033730">
    <property type="entry name" value="ProRS_core_prok"/>
</dbReference>
<dbReference type="InterPro" id="IPR036754">
    <property type="entry name" value="YbaK/aa-tRNA-synt-asso_dom_sf"/>
</dbReference>
<dbReference type="InterPro" id="IPR007214">
    <property type="entry name" value="YbaK/aa-tRNA-synth-assoc-dom"/>
</dbReference>
<dbReference type="NCBIfam" id="NF006625">
    <property type="entry name" value="PRK09194.1"/>
    <property type="match status" value="1"/>
</dbReference>
<dbReference type="NCBIfam" id="TIGR00409">
    <property type="entry name" value="proS_fam_II"/>
    <property type="match status" value="1"/>
</dbReference>
<dbReference type="PANTHER" id="PTHR42753">
    <property type="entry name" value="MITOCHONDRIAL RIBOSOME PROTEIN L39/PROLYL-TRNA LIGASE FAMILY MEMBER"/>
    <property type="match status" value="1"/>
</dbReference>
<dbReference type="PANTHER" id="PTHR42753:SF2">
    <property type="entry name" value="PROLINE--TRNA LIGASE"/>
    <property type="match status" value="1"/>
</dbReference>
<dbReference type="Pfam" id="PF03129">
    <property type="entry name" value="HGTP_anticodon"/>
    <property type="match status" value="1"/>
</dbReference>
<dbReference type="Pfam" id="PF00587">
    <property type="entry name" value="tRNA-synt_2b"/>
    <property type="match status" value="1"/>
</dbReference>
<dbReference type="Pfam" id="PF04073">
    <property type="entry name" value="tRNA_edit"/>
    <property type="match status" value="1"/>
</dbReference>
<dbReference type="PIRSF" id="PIRSF001535">
    <property type="entry name" value="ProRS_1"/>
    <property type="match status" value="1"/>
</dbReference>
<dbReference type="PRINTS" id="PR01046">
    <property type="entry name" value="TRNASYNTHPRO"/>
</dbReference>
<dbReference type="SUPFAM" id="SSF52954">
    <property type="entry name" value="Class II aaRS ABD-related"/>
    <property type="match status" value="1"/>
</dbReference>
<dbReference type="SUPFAM" id="SSF55681">
    <property type="entry name" value="Class II aaRS and biotin synthetases"/>
    <property type="match status" value="1"/>
</dbReference>
<dbReference type="SUPFAM" id="SSF55826">
    <property type="entry name" value="YbaK/ProRS associated domain"/>
    <property type="match status" value="1"/>
</dbReference>
<dbReference type="PROSITE" id="PS50862">
    <property type="entry name" value="AA_TRNA_LIGASE_II"/>
    <property type="match status" value="1"/>
</dbReference>
<gene>
    <name evidence="1" type="primary">proS</name>
    <name type="ordered locus">SF0185</name>
    <name type="ordered locus">S0187</name>
</gene>
<protein>
    <recommendedName>
        <fullName evidence="1">Proline--tRNA ligase</fullName>
        <ecNumber evidence="1">6.1.1.15</ecNumber>
    </recommendedName>
    <alternativeName>
        <fullName evidence="1">Prolyl-tRNA synthetase</fullName>
        <shortName evidence="1">ProRS</shortName>
    </alternativeName>
</protein>
<comment type="function">
    <text evidence="1">Catalyzes the attachment of proline to tRNA(Pro) in a two-step reaction: proline is first activated by ATP to form Pro-AMP and then transferred to the acceptor end of tRNA(Pro). As ProRS can inadvertently accommodate and process non-cognate amino acids such as alanine and cysteine, to avoid such errors it has two additional distinct editing activities against alanine. One activity is designated as 'pretransfer' editing and involves the tRNA(Pro)-independent hydrolysis of activated Ala-AMP. The other activity is designated 'posttransfer' editing and involves deacylation of mischarged Ala-tRNA(Pro). The misacylated Cys-tRNA(Pro) is not edited by ProRS.</text>
</comment>
<comment type="catalytic activity">
    <reaction evidence="1">
        <text>tRNA(Pro) + L-proline + ATP = L-prolyl-tRNA(Pro) + AMP + diphosphate</text>
        <dbReference type="Rhea" id="RHEA:14305"/>
        <dbReference type="Rhea" id="RHEA-COMP:9700"/>
        <dbReference type="Rhea" id="RHEA-COMP:9702"/>
        <dbReference type="ChEBI" id="CHEBI:30616"/>
        <dbReference type="ChEBI" id="CHEBI:33019"/>
        <dbReference type="ChEBI" id="CHEBI:60039"/>
        <dbReference type="ChEBI" id="CHEBI:78442"/>
        <dbReference type="ChEBI" id="CHEBI:78532"/>
        <dbReference type="ChEBI" id="CHEBI:456215"/>
        <dbReference type="EC" id="6.1.1.15"/>
    </reaction>
</comment>
<comment type="subunit">
    <text evidence="1">Homodimer.</text>
</comment>
<comment type="subcellular location">
    <subcellularLocation>
        <location evidence="1">Cytoplasm</location>
    </subcellularLocation>
</comment>
<comment type="domain">
    <text evidence="1">Consists of three domains: the N-terminal catalytic domain, the editing domain and the C-terminal anticodon-binding domain.</text>
</comment>
<comment type="similarity">
    <text evidence="1">Belongs to the class-II aminoacyl-tRNA synthetase family. ProS type 1 subfamily.</text>
</comment>
<name>SYP_SHIFL</name>